<reference key="1">
    <citation type="journal article" date="2006" name="Mol. Microbiol.">
        <title>Role of pathogenicity island-associated integrases in the genome plasticity of uropathogenic Escherichia coli strain 536.</title>
        <authorList>
            <person name="Hochhut B."/>
            <person name="Wilde C."/>
            <person name="Balling G."/>
            <person name="Middendorf B."/>
            <person name="Dobrindt U."/>
            <person name="Brzuszkiewicz E."/>
            <person name="Gottschalk G."/>
            <person name="Carniel E."/>
            <person name="Hacker J."/>
        </authorList>
    </citation>
    <scope>NUCLEOTIDE SEQUENCE [LARGE SCALE GENOMIC DNA]</scope>
    <source>
        <strain>536 / UPEC</strain>
    </source>
</reference>
<sequence length="234" mass="26179">MEFSPPLQRATLIQRYKRFLADVITPDGRELTLHCPNTGAMTGCATPGDTVWYSTSDNTKRKYPHTWELTQSQSGAIICVNTLWANRLTKEAILNESISELAGYSSLKSEVKYGAERSRIDFMLQADSRPDCYIEVKSVTLAENEQGYFPDAVTERGQKHLRELMSVAAEGQRAVIFFAVLHSAITRFSPARHIDEKYAQLLSEAQQRGVEILAYKAELSAEGMALKKSLPVTL</sequence>
<feature type="chain" id="PRO_1000007981" description="Sugar fermentation stimulation protein A">
    <location>
        <begin position="1"/>
        <end position="234"/>
    </location>
</feature>
<feature type="DNA-binding region" description="H-T-H motif" evidence="1">
    <location>
        <begin position="201"/>
        <end position="220"/>
    </location>
</feature>
<keyword id="KW-0238">DNA-binding</keyword>
<gene>
    <name evidence="1" type="primary">sfsA</name>
    <name type="ordered locus">ECP_0156</name>
</gene>
<organism>
    <name type="scientific">Escherichia coli O6:K15:H31 (strain 536 / UPEC)</name>
    <dbReference type="NCBI Taxonomy" id="362663"/>
    <lineage>
        <taxon>Bacteria</taxon>
        <taxon>Pseudomonadati</taxon>
        <taxon>Pseudomonadota</taxon>
        <taxon>Gammaproteobacteria</taxon>
        <taxon>Enterobacterales</taxon>
        <taxon>Enterobacteriaceae</taxon>
        <taxon>Escherichia</taxon>
    </lineage>
</organism>
<name>SFSA_ECOL5</name>
<proteinExistence type="inferred from homology"/>
<dbReference type="EMBL" id="CP000247">
    <property type="protein sequence ID" value="ABG68196.1"/>
    <property type="molecule type" value="Genomic_DNA"/>
</dbReference>
<dbReference type="RefSeq" id="WP_000396047.1">
    <property type="nucleotide sequence ID" value="NC_008253.1"/>
</dbReference>
<dbReference type="SMR" id="Q0TLI5"/>
<dbReference type="KEGG" id="ecp:ECP_0156"/>
<dbReference type="HOGENOM" id="CLU_052299_2_0_6"/>
<dbReference type="Proteomes" id="UP000009182">
    <property type="component" value="Chromosome"/>
</dbReference>
<dbReference type="GO" id="GO:0003677">
    <property type="term" value="F:DNA binding"/>
    <property type="evidence" value="ECO:0007669"/>
    <property type="project" value="UniProtKB-KW"/>
</dbReference>
<dbReference type="CDD" id="cd22359">
    <property type="entry name" value="SfsA-like_bacterial"/>
    <property type="match status" value="1"/>
</dbReference>
<dbReference type="FunFam" id="2.40.50.580:FF:000001">
    <property type="entry name" value="Sugar fermentation stimulation protein A"/>
    <property type="match status" value="1"/>
</dbReference>
<dbReference type="FunFam" id="3.40.1350.60:FF:000001">
    <property type="entry name" value="Sugar fermentation stimulation protein A"/>
    <property type="match status" value="1"/>
</dbReference>
<dbReference type="Gene3D" id="2.40.50.580">
    <property type="match status" value="1"/>
</dbReference>
<dbReference type="Gene3D" id="3.40.1350.60">
    <property type="match status" value="1"/>
</dbReference>
<dbReference type="HAMAP" id="MF_00095">
    <property type="entry name" value="SfsA"/>
    <property type="match status" value="1"/>
</dbReference>
<dbReference type="InterPro" id="IPR005224">
    <property type="entry name" value="SfsA"/>
</dbReference>
<dbReference type="InterPro" id="IPR040452">
    <property type="entry name" value="SfsA_C"/>
</dbReference>
<dbReference type="InterPro" id="IPR041465">
    <property type="entry name" value="SfsA_N"/>
</dbReference>
<dbReference type="NCBIfam" id="TIGR00230">
    <property type="entry name" value="sfsA"/>
    <property type="match status" value="1"/>
</dbReference>
<dbReference type="PANTHER" id="PTHR30545">
    <property type="entry name" value="SUGAR FERMENTATION STIMULATION PROTEIN A"/>
    <property type="match status" value="1"/>
</dbReference>
<dbReference type="PANTHER" id="PTHR30545:SF2">
    <property type="entry name" value="SUGAR FERMENTATION STIMULATION PROTEIN A"/>
    <property type="match status" value="1"/>
</dbReference>
<dbReference type="Pfam" id="PF03749">
    <property type="entry name" value="SfsA"/>
    <property type="match status" value="1"/>
</dbReference>
<dbReference type="Pfam" id="PF17746">
    <property type="entry name" value="SfsA_N"/>
    <property type="match status" value="1"/>
</dbReference>
<comment type="function">
    <text evidence="1">Binds to DNA non-specifically. Could be a regulatory factor involved in maltose metabolism.</text>
</comment>
<comment type="similarity">
    <text evidence="1">Belongs to the SfsA family.</text>
</comment>
<protein>
    <recommendedName>
        <fullName evidence="1">Sugar fermentation stimulation protein A</fullName>
    </recommendedName>
</protein>
<evidence type="ECO:0000255" key="1">
    <source>
        <dbReference type="HAMAP-Rule" id="MF_00095"/>
    </source>
</evidence>
<accession>Q0TLI5</accession>